<comment type="alternative products">
    <event type="alternative splicing"/>
    <isoform>
        <id>Q8L8L9-1</id>
        <name>1</name>
        <sequence type="displayed"/>
    </isoform>
    <isoform>
        <id>Q8L8L9-2</id>
        <name>2</name>
        <sequence type="described" ref="VSP_039566"/>
    </isoform>
</comment>
<comment type="sequence caution" evidence="4">
    <conflict type="erroneous gene model prediction">
        <sequence resource="EMBL-CDS" id="CAB52872"/>
    </conflict>
    <text>The predicted gene At4g22165 has been split into 2 genes: At4g22160 and At4g22165.</text>
</comment>
<comment type="sequence caution" evidence="4">
    <conflict type="erroneous gene model prediction">
        <sequence resource="EMBL-CDS" id="CAB79171"/>
    </conflict>
    <text>The predicted gene At4g22165 has been split into 2 genes: At4g22160 and At4g22165.</text>
</comment>
<reference key="1">
    <citation type="journal article" date="1999" name="Nature">
        <title>Sequence and analysis of chromosome 4 of the plant Arabidopsis thaliana.</title>
        <authorList>
            <person name="Mayer K.F.X."/>
            <person name="Schueller C."/>
            <person name="Wambutt R."/>
            <person name="Murphy G."/>
            <person name="Volckaert G."/>
            <person name="Pohl T."/>
            <person name="Duesterhoeft A."/>
            <person name="Stiekema W."/>
            <person name="Entian K.-D."/>
            <person name="Terryn N."/>
            <person name="Harris B."/>
            <person name="Ansorge W."/>
            <person name="Brandt P."/>
            <person name="Grivell L.A."/>
            <person name="Rieger M."/>
            <person name="Weichselgartner M."/>
            <person name="de Simone V."/>
            <person name="Obermaier B."/>
            <person name="Mache R."/>
            <person name="Mueller M."/>
            <person name="Kreis M."/>
            <person name="Delseny M."/>
            <person name="Puigdomenech P."/>
            <person name="Watson M."/>
            <person name="Schmidtheini T."/>
            <person name="Reichert B."/>
            <person name="Portetelle D."/>
            <person name="Perez-Alonso M."/>
            <person name="Boutry M."/>
            <person name="Bancroft I."/>
            <person name="Vos P."/>
            <person name="Hoheisel J."/>
            <person name="Zimmermann W."/>
            <person name="Wedler H."/>
            <person name="Ridley P."/>
            <person name="Langham S.-A."/>
            <person name="McCullagh B."/>
            <person name="Bilham L."/>
            <person name="Robben J."/>
            <person name="van der Schueren J."/>
            <person name="Grymonprez B."/>
            <person name="Chuang Y.-J."/>
            <person name="Vandenbussche F."/>
            <person name="Braeken M."/>
            <person name="Weltjens I."/>
            <person name="Voet M."/>
            <person name="Bastiaens I."/>
            <person name="Aert R."/>
            <person name="Defoor E."/>
            <person name="Weitzenegger T."/>
            <person name="Bothe G."/>
            <person name="Ramsperger U."/>
            <person name="Hilbert H."/>
            <person name="Braun M."/>
            <person name="Holzer E."/>
            <person name="Brandt A."/>
            <person name="Peters S."/>
            <person name="van Staveren M."/>
            <person name="Dirkse W."/>
            <person name="Mooijman P."/>
            <person name="Klein Lankhorst R."/>
            <person name="Rose M."/>
            <person name="Hauf J."/>
            <person name="Koetter P."/>
            <person name="Berneiser S."/>
            <person name="Hempel S."/>
            <person name="Feldpausch M."/>
            <person name="Lamberth S."/>
            <person name="Van den Daele H."/>
            <person name="De Keyser A."/>
            <person name="Buysshaert C."/>
            <person name="Gielen J."/>
            <person name="Villarroel R."/>
            <person name="De Clercq R."/>
            <person name="van Montagu M."/>
            <person name="Rogers J."/>
            <person name="Cronin A."/>
            <person name="Quail M.A."/>
            <person name="Bray-Allen S."/>
            <person name="Clark L."/>
            <person name="Doggett J."/>
            <person name="Hall S."/>
            <person name="Kay M."/>
            <person name="Lennard N."/>
            <person name="McLay K."/>
            <person name="Mayes R."/>
            <person name="Pettett A."/>
            <person name="Rajandream M.A."/>
            <person name="Lyne M."/>
            <person name="Benes V."/>
            <person name="Rechmann S."/>
            <person name="Borkova D."/>
            <person name="Bloecker H."/>
            <person name="Scharfe M."/>
            <person name="Grimm M."/>
            <person name="Loehnert T.-H."/>
            <person name="Dose S."/>
            <person name="de Haan M."/>
            <person name="Maarse A.C."/>
            <person name="Schaefer M."/>
            <person name="Mueller-Auer S."/>
            <person name="Gabel C."/>
            <person name="Fuchs M."/>
            <person name="Fartmann B."/>
            <person name="Granderath K."/>
            <person name="Dauner D."/>
            <person name="Herzl A."/>
            <person name="Neumann S."/>
            <person name="Argiriou A."/>
            <person name="Vitale D."/>
            <person name="Liguori R."/>
            <person name="Piravandi E."/>
            <person name="Massenet O."/>
            <person name="Quigley F."/>
            <person name="Clabauld G."/>
            <person name="Muendlein A."/>
            <person name="Felber R."/>
            <person name="Schnabl S."/>
            <person name="Hiller R."/>
            <person name="Schmidt W."/>
            <person name="Lecharny A."/>
            <person name="Aubourg S."/>
            <person name="Chefdor F."/>
            <person name="Cooke R."/>
            <person name="Berger C."/>
            <person name="Monfort A."/>
            <person name="Casacuberta E."/>
            <person name="Gibbons T."/>
            <person name="Weber N."/>
            <person name="Vandenbol M."/>
            <person name="Bargues M."/>
            <person name="Terol J."/>
            <person name="Torres A."/>
            <person name="Perez-Perez A."/>
            <person name="Purnelle B."/>
            <person name="Bent E."/>
            <person name="Johnson S."/>
            <person name="Tacon D."/>
            <person name="Jesse T."/>
            <person name="Heijnen L."/>
            <person name="Schwarz S."/>
            <person name="Scholler P."/>
            <person name="Heber S."/>
            <person name="Francs P."/>
            <person name="Bielke C."/>
            <person name="Frishman D."/>
            <person name="Haase D."/>
            <person name="Lemcke K."/>
            <person name="Mewes H.-W."/>
            <person name="Stocker S."/>
            <person name="Zaccaria P."/>
            <person name="Bevan M."/>
            <person name="Wilson R.K."/>
            <person name="de la Bastide M."/>
            <person name="Habermann K."/>
            <person name="Parnell L."/>
            <person name="Dedhia N."/>
            <person name="Gnoj L."/>
            <person name="Schutz K."/>
            <person name="Huang E."/>
            <person name="Spiegel L."/>
            <person name="Sekhon M."/>
            <person name="Murray J."/>
            <person name="Sheet P."/>
            <person name="Cordes M."/>
            <person name="Abu-Threideh J."/>
            <person name="Stoneking T."/>
            <person name="Kalicki J."/>
            <person name="Graves T."/>
            <person name="Harmon G."/>
            <person name="Edwards J."/>
            <person name="Latreille P."/>
            <person name="Courtney L."/>
            <person name="Cloud J."/>
            <person name="Abbott A."/>
            <person name="Scott K."/>
            <person name="Johnson D."/>
            <person name="Minx P."/>
            <person name="Bentley D."/>
            <person name="Fulton B."/>
            <person name="Miller N."/>
            <person name="Greco T."/>
            <person name="Kemp K."/>
            <person name="Kramer J."/>
            <person name="Fulton L."/>
            <person name="Mardis E."/>
            <person name="Dante M."/>
            <person name="Pepin K."/>
            <person name="Hillier L.W."/>
            <person name="Nelson J."/>
            <person name="Spieth J."/>
            <person name="Ryan E."/>
            <person name="Andrews S."/>
            <person name="Geisel C."/>
            <person name="Layman D."/>
            <person name="Du H."/>
            <person name="Ali J."/>
            <person name="Berghoff A."/>
            <person name="Jones K."/>
            <person name="Drone K."/>
            <person name="Cotton M."/>
            <person name="Joshu C."/>
            <person name="Antonoiu B."/>
            <person name="Zidanic M."/>
            <person name="Strong C."/>
            <person name="Sun H."/>
            <person name="Lamar B."/>
            <person name="Yordan C."/>
            <person name="Ma P."/>
            <person name="Zhong J."/>
            <person name="Preston R."/>
            <person name="Vil D."/>
            <person name="Shekher M."/>
            <person name="Matero A."/>
            <person name="Shah R."/>
            <person name="Swaby I.K."/>
            <person name="O'Shaughnessy A."/>
            <person name="Rodriguez M."/>
            <person name="Hoffman J."/>
            <person name="Till S."/>
            <person name="Granat S."/>
            <person name="Shohdy N."/>
            <person name="Hasegawa A."/>
            <person name="Hameed A."/>
            <person name="Lodhi M."/>
            <person name="Johnson A."/>
            <person name="Chen E."/>
            <person name="Marra M.A."/>
            <person name="Martienssen R."/>
            <person name="McCombie W.R."/>
        </authorList>
    </citation>
    <scope>NUCLEOTIDE SEQUENCE [LARGE SCALE GENOMIC DNA]</scope>
    <source>
        <strain>cv. Columbia</strain>
    </source>
</reference>
<reference key="2">
    <citation type="journal article" date="2017" name="Plant J.">
        <title>Araport11: a complete reannotation of the Arabidopsis thaliana reference genome.</title>
        <authorList>
            <person name="Cheng C.Y."/>
            <person name="Krishnakumar V."/>
            <person name="Chan A.P."/>
            <person name="Thibaud-Nissen F."/>
            <person name="Schobel S."/>
            <person name="Town C.D."/>
        </authorList>
    </citation>
    <scope>GENOME REANNOTATION</scope>
    <source>
        <strain>cv. Columbia</strain>
    </source>
</reference>
<reference key="3">
    <citation type="journal article" date="2002" name="Science">
        <title>Functional annotation of a full-length Arabidopsis cDNA collection.</title>
        <authorList>
            <person name="Seki M."/>
            <person name="Narusaka M."/>
            <person name="Kamiya A."/>
            <person name="Ishida J."/>
            <person name="Satou M."/>
            <person name="Sakurai T."/>
            <person name="Nakajima M."/>
            <person name="Enju A."/>
            <person name="Akiyama K."/>
            <person name="Oono Y."/>
            <person name="Muramatsu M."/>
            <person name="Hayashizaki Y."/>
            <person name="Kawai J."/>
            <person name="Carninci P."/>
            <person name="Itoh M."/>
            <person name="Ishii Y."/>
            <person name="Arakawa T."/>
            <person name="Shibata K."/>
            <person name="Shinagawa A."/>
            <person name="Shinozaki K."/>
        </authorList>
    </citation>
    <scope>NUCLEOTIDE SEQUENCE [LARGE SCALE MRNA] (ISOFORM 2)</scope>
    <source>
        <strain>cv. Columbia</strain>
    </source>
</reference>
<reference key="4">
    <citation type="submission" date="2002-03" db="EMBL/GenBank/DDBJ databases">
        <title>Full-length cDNA from Arabidopsis thaliana.</title>
        <authorList>
            <person name="Brover V.V."/>
            <person name="Troukhan M.E."/>
            <person name="Alexandrov N.A."/>
            <person name="Lu Y.-P."/>
            <person name="Flavell R.B."/>
            <person name="Feldmann K.A."/>
        </authorList>
    </citation>
    <scope>NUCLEOTIDE SEQUENCE [LARGE SCALE MRNA] (ISOFORM 1)</scope>
    <source>
        <strain>cv. Columbia</strain>
    </source>
</reference>
<evidence type="ECO:0000255" key="1"/>
<evidence type="ECO:0000256" key="2">
    <source>
        <dbReference type="SAM" id="MobiDB-lite"/>
    </source>
</evidence>
<evidence type="ECO:0000303" key="3">
    <source>
    </source>
</evidence>
<evidence type="ECO:0000305" key="4"/>
<name>Y4216_ARATH</name>
<keyword id="KW-0025">Alternative splicing</keyword>
<keyword id="KW-0175">Coiled coil</keyword>
<keyword id="KW-1185">Reference proteome</keyword>
<sequence length="163" mass="18210">MGKSARLRRSQTSSPENVLLGKDSSDDPYRSDSETESNSSSGTESNMSSDSTTSAGVSAMIRVLSDSLLRTELAEMEMIKAREAARLEAEKRRLEMEVDLTQMVLQTHLQAMSSLPVGEHKIYQAQRKRKRSDVEELESSTREKSIALLGLLQLNLIFWNSLT</sequence>
<organism>
    <name type="scientific">Arabidopsis thaliana</name>
    <name type="common">Mouse-ear cress</name>
    <dbReference type="NCBI Taxonomy" id="3702"/>
    <lineage>
        <taxon>Eukaryota</taxon>
        <taxon>Viridiplantae</taxon>
        <taxon>Streptophyta</taxon>
        <taxon>Embryophyta</taxon>
        <taxon>Tracheophyta</taxon>
        <taxon>Spermatophyta</taxon>
        <taxon>Magnoliopsida</taxon>
        <taxon>eudicotyledons</taxon>
        <taxon>Gunneridae</taxon>
        <taxon>Pentapetalae</taxon>
        <taxon>rosids</taxon>
        <taxon>malvids</taxon>
        <taxon>Brassicales</taxon>
        <taxon>Brassicaceae</taxon>
        <taxon>Camelineae</taxon>
        <taxon>Arabidopsis</taxon>
    </lineage>
</organism>
<dbReference type="EMBL" id="AL021712">
    <property type="protein sequence ID" value="CAB52872.1"/>
    <property type="status" value="ALT_SEQ"/>
    <property type="molecule type" value="Genomic_DNA"/>
</dbReference>
<dbReference type="EMBL" id="AL161556">
    <property type="protein sequence ID" value="CAB79171.1"/>
    <property type="status" value="ALT_SEQ"/>
    <property type="molecule type" value="Genomic_DNA"/>
</dbReference>
<dbReference type="EMBL" id="CP002687">
    <property type="protein sequence ID" value="AEE84565.1"/>
    <property type="molecule type" value="Genomic_DNA"/>
</dbReference>
<dbReference type="EMBL" id="CP002687">
    <property type="protein sequence ID" value="AEE84566.1"/>
    <property type="molecule type" value="Genomic_DNA"/>
</dbReference>
<dbReference type="EMBL" id="AK118765">
    <property type="protein sequence ID" value="BAC43358.1"/>
    <property type="molecule type" value="mRNA"/>
</dbReference>
<dbReference type="EMBL" id="AY088914">
    <property type="protein sequence ID" value="AAM67220.1"/>
    <property type="molecule type" value="mRNA"/>
</dbReference>
<dbReference type="PIR" id="E85253">
    <property type="entry name" value="E85253"/>
</dbReference>
<dbReference type="RefSeq" id="NP_567646.1">
    <molecule id="Q8L8L9-1"/>
    <property type="nucleotide sequence ID" value="NM_118337.3"/>
</dbReference>
<dbReference type="RefSeq" id="NP_849419.1">
    <molecule id="Q8L8L9-2"/>
    <property type="nucleotide sequence ID" value="NM_179088.2"/>
</dbReference>
<dbReference type="SMR" id="Q8L8L9"/>
<dbReference type="FunCoup" id="Q8L8L9">
    <property type="interactions" value="11"/>
</dbReference>
<dbReference type="STRING" id="3702.Q8L8L9"/>
<dbReference type="PaxDb" id="3702-AT4G22160.2"/>
<dbReference type="EnsemblPlants" id="AT4G22160.1">
    <molecule id="Q8L8L9-2"/>
    <property type="protein sequence ID" value="AT4G22160.1"/>
    <property type="gene ID" value="AT4G22160"/>
</dbReference>
<dbReference type="EnsemblPlants" id="AT4G22160.2">
    <molecule id="Q8L8L9-1"/>
    <property type="protein sequence ID" value="AT4G22160.2"/>
    <property type="gene ID" value="AT4G22160"/>
</dbReference>
<dbReference type="GeneID" id="828305"/>
<dbReference type="Gramene" id="AT4G22160.1">
    <molecule id="Q8L8L9-2"/>
    <property type="protein sequence ID" value="AT4G22160.1"/>
    <property type="gene ID" value="AT4G22160"/>
</dbReference>
<dbReference type="Gramene" id="AT4G22160.2">
    <molecule id="Q8L8L9-1"/>
    <property type="protein sequence ID" value="AT4G22160.2"/>
    <property type="gene ID" value="AT4G22160"/>
</dbReference>
<dbReference type="KEGG" id="ath:AT4G22160"/>
<dbReference type="Araport" id="AT4G22160"/>
<dbReference type="TAIR" id="AT4G22160"/>
<dbReference type="eggNOG" id="ENOG502S5W7">
    <property type="taxonomic scope" value="Eukaryota"/>
</dbReference>
<dbReference type="InParanoid" id="Q8L8L9"/>
<dbReference type="OMA" id="ISQREGA"/>
<dbReference type="PhylomeDB" id="Q8L8L9"/>
<dbReference type="PRO" id="PR:Q8L8L9"/>
<dbReference type="Proteomes" id="UP000006548">
    <property type="component" value="Chromosome 4"/>
</dbReference>
<dbReference type="ExpressionAtlas" id="Q8L8L9">
    <property type="expression patterns" value="baseline and differential"/>
</dbReference>
<feature type="chain" id="PRO_0000396015" description="Uncharacterized protein At4g22160">
    <location>
        <begin position="1"/>
        <end position="163"/>
    </location>
</feature>
<feature type="region of interest" description="Disordered" evidence="2">
    <location>
        <begin position="1"/>
        <end position="54"/>
    </location>
</feature>
<feature type="coiled-coil region" evidence="1">
    <location>
        <begin position="69"/>
        <end position="143"/>
    </location>
</feature>
<feature type="compositionally biased region" description="Basic and acidic residues" evidence="2">
    <location>
        <begin position="23"/>
        <end position="33"/>
    </location>
</feature>
<feature type="compositionally biased region" description="Low complexity" evidence="2">
    <location>
        <begin position="36"/>
        <end position="52"/>
    </location>
</feature>
<feature type="splice variant" id="VSP_039566" description="In isoform 2." evidence="3">
    <location>
        <begin position="143"/>
        <end position="163"/>
    </location>
</feature>
<feature type="sequence conflict" description="In Ref. 4; AAM67220." evidence="4" ref="4">
    <original>V</original>
    <variation>I</variation>
    <location>
        <position position="117"/>
    </location>
</feature>
<accession>Q8L8L9</accession>
<accession>Q8GWL9</accession>
<accession>Q9SUG5</accession>
<protein>
    <recommendedName>
        <fullName>Uncharacterized protein At4g22160</fullName>
    </recommendedName>
</protein>
<gene>
    <name type="ordered locus">At4g22160</name>
    <name type="ORF">T10I14.8</name>
</gene>
<proteinExistence type="evidence at transcript level"/>